<organism>
    <name type="scientific">Staphylococcus aureus (strain MW2)</name>
    <dbReference type="NCBI Taxonomy" id="196620"/>
    <lineage>
        <taxon>Bacteria</taxon>
        <taxon>Bacillati</taxon>
        <taxon>Bacillota</taxon>
        <taxon>Bacilli</taxon>
        <taxon>Bacillales</taxon>
        <taxon>Staphylococcaceae</taxon>
        <taxon>Staphylococcus</taxon>
    </lineage>
</organism>
<evidence type="ECO:0000255" key="1">
    <source>
        <dbReference type="HAMAP-Rule" id="MF_00291"/>
    </source>
</evidence>
<evidence type="ECO:0000256" key="2">
    <source>
        <dbReference type="SAM" id="MobiDB-lite"/>
    </source>
</evidence>
<evidence type="ECO:0000305" key="3"/>
<accession>P66545</accession>
<accession>Q99UL5</accession>
<keyword id="KW-0687">Ribonucleoprotein</keyword>
<keyword id="KW-0689">Ribosomal protein</keyword>
<comment type="similarity">
    <text evidence="1">Belongs to the universal ribosomal protein uS2 family.</text>
</comment>
<gene>
    <name evidence="1" type="primary">rpsB</name>
    <name type="ordered locus">MW1139</name>
</gene>
<reference key="1">
    <citation type="journal article" date="2002" name="Lancet">
        <title>Genome and virulence determinants of high virulence community-acquired MRSA.</title>
        <authorList>
            <person name="Baba T."/>
            <person name="Takeuchi F."/>
            <person name="Kuroda M."/>
            <person name="Yuzawa H."/>
            <person name="Aoki K."/>
            <person name="Oguchi A."/>
            <person name="Nagai Y."/>
            <person name="Iwama N."/>
            <person name="Asano K."/>
            <person name="Naimi T."/>
            <person name="Kuroda H."/>
            <person name="Cui L."/>
            <person name="Yamamoto K."/>
            <person name="Hiramatsu K."/>
        </authorList>
    </citation>
    <scope>NUCLEOTIDE SEQUENCE [LARGE SCALE GENOMIC DNA]</scope>
    <source>
        <strain>MW2</strain>
    </source>
</reference>
<feature type="chain" id="PRO_0000134243" description="Small ribosomal subunit protein uS2">
    <location>
        <begin position="1"/>
        <end position="255"/>
    </location>
</feature>
<feature type="region of interest" description="Disordered" evidence="2">
    <location>
        <begin position="226"/>
        <end position="255"/>
    </location>
</feature>
<name>RS2_STAAW</name>
<sequence>MAVISMKQLLEAGVHFGHQTRRWNPKMKKYIFTERNGIYIIDLQKTVKKVDEAYNFLKQVSEDGGQVLFVGTKKQAQESVKSEAERAGQFYINQRWLGGLLTNYKTISKRIKRISEIEKMEEDGLFEVLPKKEVVELKKEYDRLIKFLGGIRDMKSMPQALFVVDPRKERNAIAEARKLNIPIVGIVDTNCDPDEIDYVIPANDDAIRAVKLLTAKMADAILEGQQGVSNEEVAAEQNIDLDEKEKSEETEATEE</sequence>
<protein>
    <recommendedName>
        <fullName evidence="1">Small ribosomal subunit protein uS2</fullName>
    </recommendedName>
    <alternativeName>
        <fullName evidence="3">30S ribosomal protein S2</fullName>
    </alternativeName>
</protein>
<proteinExistence type="inferred from homology"/>
<dbReference type="EMBL" id="BA000033">
    <property type="protein sequence ID" value="BAB95004.1"/>
    <property type="molecule type" value="Genomic_DNA"/>
</dbReference>
<dbReference type="RefSeq" id="WP_000268484.1">
    <property type="nucleotide sequence ID" value="NC_003923.1"/>
</dbReference>
<dbReference type="SMR" id="P66545"/>
<dbReference type="GeneID" id="98345571"/>
<dbReference type="KEGG" id="sam:MW1139"/>
<dbReference type="HOGENOM" id="CLU_040318_1_2_9"/>
<dbReference type="GO" id="GO:0022627">
    <property type="term" value="C:cytosolic small ribosomal subunit"/>
    <property type="evidence" value="ECO:0007669"/>
    <property type="project" value="TreeGrafter"/>
</dbReference>
<dbReference type="GO" id="GO:0003735">
    <property type="term" value="F:structural constituent of ribosome"/>
    <property type="evidence" value="ECO:0007669"/>
    <property type="project" value="InterPro"/>
</dbReference>
<dbReference type="GO" id="GO:0006412">
    <property type="term" value="P:translation"/>
    <property type="evidence" value="ECO:0007669"/>
    <property type="project" value="UniProtKB-UniRule"/>
</dbReference>
<dbReference type="CDD" id="cd01425">
    <property type="entry name" value="RPS2"/>
    <property type="match status" value="1"/>
</dbReference>
<dbReference type="FunFam" id="1.10.287.610:FF:000001">
    <property type="entry name" value="30S ribosomal protein S2"/>
    <property type="match status" value="1"/>
</dbReference>
<dbReference type="Gene3D" id="3.40.50.10490">
    <property type="entry name" value="Glucose-6-phosphate isomerase like protein, domain 1"/>
    <property type="match status" value="1"/>
</dbReference>
<dbReference type="Gene3D" id="1.10.287.610">
    <property type="entry name" value="Helix hairpin bin"/>
    <property type="match status" value="1"/>
</dbReference>
<dbReference type="HAMAP" id="MF_00291_B">
    <property type="entry name" value="Ribosomal_uS2_B"/>
    <property type="match status" value="1"/>
</dbReference>
<dbReference type="InterPro" id="IPR001865">
    <property type="entry name" value="Ribosomal_uS2"/>
</dbReference>
<dbReference type="InterPro" id="IPR005706">
    <property type="entry name" value="Ribosomal_uS2_bac/mit/plastid"/>
</dbReference>
<dbReference type="InterPro" id="IPR018130">
    <property type="entry name" value="Ribosomal_uS2_CS"/>
</dbReference>
<dbReference type="InterPro" id="IPR023591">
    <property type="entry name" value="Ribosomal_uS2_flav_dom_sf"/>
</dbReference>
<dbReference type="NCBIfam" id="TIGR01011">
    <property type="entry name" value="rpsB_bact"/>
    <property type="match status" value="1"/>
</dbReference>
<dbReference type="PANTHER" id="PTHR12534">
    <property type="entry name" value="30S RIBOSOMAL PROTEIN S2 PROKARYOTIC AND ORGANELLAR"/>
    <property type="match status" value="1"/>
</dbReference>
<dbReference type="PANTHER" id="PTHR12534:SF0">
    <property type="entry name" value="SMALL RIBOSOMAL SUBUNIT PROTEIN US2M"/>
    <property type="match status" value="1"/>
</dbReference>
<dbReference type="Pfam" id="PF00318">
    <property type="entry name" value="Ribosomal_S2"/>
    <property type="match status" value="1"/>
</dbReference>
<dbReference type="PRINTS" id="PR00395">
    <property type="entry name" value="RIBOSOMALS2"/>
</dbReference>
<dbReference type="SUPFAM" id="SSF52313">
    <property type="entry name" value="Ribosomal protein S2"/>
    <property type="match status" value="1"/>
</dbReference>
<dbReference type="PROSITE" id="PS00962">
    <property type="entry name" value="RIBOSOMAL_S2_1"/>
    <property type="match status" value="1"/>
</dbReference>
<dbReference type="PROSITE" id="PS00963">
    <property type="entry name" value="RIBOSOMAL_S2_2"/>
    <property type="match status" value="1"/>
</dbReference>